<organism>
    <name type="scientific">Escherichia coli O139:H28 (strain E24377A / ETEC)</name>
    <dbReference type="NCBI Taxonomy" id="331111"/>
    <lineage>
        <taxon>Bacteria</taxon>
        <taxon>Pseudomonadati</taxon>
        <taxon>Pseudomonadota</taxon>
        <taxon>Gammaproteobacteria</taxon>
        <taxon>Enterobacterales</taxon>
        <taxon>Enterobacteriaceae</taxon>
        <taxon>Escherichia</taxon>
    </lineage>
</organism>
<accession>A7ZUD2</accession>
<protein>
    <recommendedName>
        <fullName evidence="1">CDP-diacylglycerol pyrophosphatase</fullName>
        <ecNumber evidence="1">3.6.1.26</ecNumber>
    </recommendedName>
    <alternativeName>
        <fullName evidence="1">CDP-diacylglycerol phosphatidylhydrolase</fullName>
    </alternativeName>
    <alternativeName>
        <fullName evidence="1">CDP-diglyceride hydrolase</fullName>
    </alternativeName>
</protein>
<proteinExistence type="inferred from homology"/>
<comment type="catalytic activity">
    <reaction evidence="1">
        <text>a CDP-1,2-diacyl-sn-glycerol + H2O = a 1,2-diacyl-sn-glycero-3-phosphate + CMP + 2 H(+)</text>
        <dbReference type="Rhea" id="RHEA:15221"/>
        <dbReference type="ChEBI" id="CHEBI:15377"/>
        <dbReference type="ChEBI" id="CHEBI:15378"/>
        <dbReference type="ChEBI" id="CHEBI:58332"/>
        <dbReference type="ChEBI" id="CHEBI:58608"/>
        <dbReference type="ChEBI" id="CHEBI:60377"/>
        <dbReference type="EC" id="3.6.1.26"/>
    </reaction>
</comment>
<comment type="pathway">
    <text evidence="1">Phospholipid metabolism; CDP-diacylglycerol degradation; phosphatidate from CDP-diacylglycerol: step 1/1.</text>
</comment>
<comment type="subcellular location">
    <subcellularLocation>
        <location evidence="1">Cell inner membrane</location>
        <topology evidence="1">Single-pass membrane protein</topology>
    </subcellularLocation>
</comment>
<comment type="similarity">
    <text evidence="1">Belongs to the Cdh family.</text>
</comment>
<feature type="chain" id="PRO_1000059463" description="CDP-diacylglycerol pyrophosphatase">
    <location>
        <begin position="1"/>
        <end position="251"/>
    </location>
</feature>
<feature type="transmembrane region" description="Helical" evidence="1">
    <location>
        <begin position="4"/>
        <end position="24"/>
    </location>
</feature>
<keyword id="KW-0997">Cell inner membrane</keyword>
<keyword id="KW-1003">Cell membrane</keyword>
<keyword id="KW-0378">Hydrolase</keyword>
<keyword id="KW-0444">Lipid biosynthesis</keyword>
<keyword id="KW-0443">Lipid metabolism</keyword>
<keyword id="KW-0472">Membrane</keyword>
<keyword id="KW-0594">Phospholipid biosynthesis</keyword>
<keyword id="KW-1208">Phospholipid metabolism</keyword>
<keyword id="KW-1185">Reference proteome</keyword>
<keyword id="KW-0812">Transmembrane</keyword>
<keyword id="KW-1133">Transmembrane helix</keyword>
<name>CDH_ECO24</name>
<dbReference type="EC" id="3.6.1.26" evidence="1"/>
<dbReference type="EMBL" id="CP000800">
    <property type="protein sequence ID" value="ABV17277.1"/>
    <property type="molecule type" value="Genomic_DNA"/>
</dbReference>
<dbReference type="RefSeq" id="WP_000708998.1">
    <property type="nucleotide sequence ID" value="NC_009801.1"/>
</dbReference>
<dbReference type="SMR" id="A7ZUD2"/>
<dbReference type="GeneID" id="93777980"/>
<dbReference type="KEGG" id="ecw:EcE24377A_4452"/>
<dbReference type="HOGENOM" id="CLU_077117_0_1_6"/>
<dbReference type="UniPathway" id="UPA00609">
    <property type="reaction ID" value="UER00664"/>
</dbReference>
<dbReference type="Proteomes" id="UP000001122">
    <property type="component" value="Chromosome"/>
</dbReference>
<dbReference type="GO" id="GO:0005886">
    <property type="term" value="C:plasma membrane"/>
    <property type="evidence" value="ECO:0007669"/>
    <property type="project" value="UniProtKB-SubCell"/>
</dbReference>
<dbReference type="GO" id="GO:0008715">
    <property type="term" value="F:CDP-diacylglycerol diphosphatase activity"/>
    <property type="evidence" value="ECO:0007669"/>
    <property type="project" value="UniProtKB-UniRule"/>
</dbReference>
<dbReference type="GO" id="GO:0046342">
    <property type="term" value="P:CDP-diacylglycerol catabolic process"/>
    <property type="evidence" value="ECO:0007669"/>
    <property type="project" value="UniProtKB-UniRule"/>
</dbReference>
<dbReference type="GO" id="GO:0008654">
    <property type="term" value="P:phospholipid biosynthetic process"/>
    <property type="evidence" value="ECO:0007669"/>
    <property type="project" value="UniProtKB-KW"/>
</dbReference>
<dbReference type="FunFam" id="3.30.428.30:FF:000001">
    <property type="entry name" value="CDP-diacylglycerol pyrophosphatase"/>
    <property type="match status" value="1"/>
</dbReference>
<dbReference type="Gene3D" id="3.30.428.30">
    <property type="entry name" value="HIT family - CDH-like"/>
    <property type="match status" value="1"/>
</dbReference>
<dbReference type="HAMAP" id="MF_00319">
    <property type="entry name" value="Cdh"/>
    <property type="match status" value="1"/>
</dbReference>
<dbReference type="InterPro" id="IPR003763">
    <property type="entry name" value="CDP-diacylglyc_Pase"/>
</dbReference>
<dbReference type="InterPro" id="IPR015993">
    <property type="entry name" value="CDP-diacylglyc_Pase_proteobac"/>
</dbReference>
<dbReference type="InterPro" id="IPR036265">
    <property type="entry name" value="HIT-like_sf"/>
</dbReference>
<dbReference type="NCBIfam" id="TIGR00672">
    <property type="entry name" value="cdh"/>
    <property type="match status" value="1"/>
</dbReference>
<dbReference type="NCBIfam" id="NF003986">
    <property type="entry name" value="PRK05471.1-5"/>
    <property type="match status" value="1"/>
</dbReference>
<dbReference type="NCBIfam" id="NF003987">
    <property type="entry name" value="PRK05471.1-6"/>
    <property type="match status" value="1"/>
</dbReference>
<dbReference type="Pfam" id="PF02611">
    <property type="entry name" value="CDH"/>
    <property type="match status" value="1"/>
</dbReference>
<dbReference type="PIRSF" id="PIRSF001273">
    <property type="entry name" value="CDH"/>
    <property type="match status" value="1"/>
</dbReference>
<dbReference type="SUPFAM" id="SSF54197">
    <property type="entry name" value="HIT-like"/>
    <property type="match status" value="1"/>
</dbReference>
<evidence type="ECO:0000255" key="1">
    <source>
        <dbReference type="HAMAP-Rule" id="MF_00319"/>
    </source>
</evidence>
<sequence>MKKAGLLFLVMIVIAVVAAGIGYWKLTGEESDTLRKIVLEECLPNQQQNQNPSPCAEVKPNAGYVVLKDLNGPLQYLLMPTYRINGTESPLLTDPSTPNFFWLAWQARDFMSKKYGQPVPDRAVSLAINSRTGRTQNHFHIHISCIRPDVREQLDNNLANISSRWLPLPGGLRGHEYLARRVTESELVQRSPFMMLAEEVPEAREHMGSYGLAMVRQSDNSFVLLATQRNLLTLNRASAEEIQDHQCEILR</sequence>
<reference key="1">
    <citation type="journal article" date="2008" name="J. Bacteriol.">
        <title>The pangenome structure of Escherichia coli: comparative genomic analysis of E. coli commensal and pathogenic isolates.</title>
        <authorList>
            <person name="Rasko D.A."/>
            <person name="Rosovitz M.J."/>
            <person name="Myers G.S.A."/>
            <person name="Mongodin E.F."/>
            <person name="Fricke W.F."/>
            <person name="Gajer P."/>
            <person name="Crabtree J."/>
            <person name="Sebaihia M."/>
            <person name="Thomson N.R."/>
            <person name="Chaudhuri R."/>
            <person name="Henderson I.R."/>
            <person name="Sperandio V."/>
            <person name="Ravel J."/>
        </authorList>
    </citation>
    <scope>NUCLEOTIDE SEQUENCE [LARGE SCALE GENOMIC DNA]</scope>
    <source>
        <strain>E24377A / ETEC</strain>
    </source>
</reference>
<gene>
    <name evidence="1" type="primary">cdh</name>
    <name type="ordered locus">EcE24377A_4452</name>
</gene>